<sequence length="179" mass="20454">MVVLDKKLLERLTSRKVPLEELEDMEKRCFLSTFTYQDAFDLGTYIRNAVKENFPEKPVAIDISLPNGHCLFRTVTYGGSALDNDFWIQRKKKTALRFGHSSFYMGCKKGDKTPEEKFFVDSKEYAFHGGAVLIQSERSDYPYACLTISGLKQEEDHLMAVSSLIAFANESLEEDLNLD</sequence>
<protein>
    <recommendedName>
        <fullName>UPF0303 protein YBR137W</fullName>
    </recommendedName>
</protein>
<name>YBY7_YEAST</name>
<accession>P38276</accession>
<accession>D6VQD3</accession>
<keyword id="KW-0002">3D-structure</keyword>
<keyword id="KW-0963">Cytoplasm</keyword>
<keyword id="KW-1185">Reference proteome</keyword>
<gene>
    <name type="ordered locus">YBR137W</name>
    <name type="ORF">YBR1013</name>
</gene>
<evidence type="ECO:0000269" key="1">
    <source>
    </source>
</evidence>
<evidence type="ECO:0000269" key="2">
    <source>
    </source>
</evidence>
<evidence type="ECO:0000305" key="3"/>
<evidence type="ECO:0007829" key="4">
    <source>
        <dbReference type="PDB" id="4CLC"/>
    </source>
</evidence>
<comment type="interaction">
    <interactant intactId="EBI-21630">
        <id>P38276</id>
    </interactant>
    <interactant intactId="EBI-31784">
        <id>Q12118</id>
        <label>SGT2</label>
    </interactant>
    <organismsDiffer>false</organismsDiffer>
    <experiments>3</experiments>
</comment>
<comment type="subcellular location">
    <subcellularLocation>
        <location evidence="1">Cytoplasm</location>
    </subcellularLocation>
</comment>
<comment type="miscellaneous">
    <text evidence="2">Present with 1200 molecules/cell in log phase SD medium.</text>
</comment>
<comment type="similarity">
    <text evidence="3">Belongs to the UPF0303 family.</text>
</comment>
<organism>
    <name type="scientific">Saccharomyces cerevisiae (strain ATCC 204508 / S288c)</name>
    <name type="common">Baker's yeast</name>
    <dbReference type="NCBI Taxonomy" id="559292"/>
    <lineage>
        <taxon>Eukaryota</taxon>
        <taxon>Fungi</taxon>
        <taxon>Dikarya</taxon>
        <taxon>Ascomycota</taxon>
        <taxon>Saccharomycotina</taxon>
        <taxon>Saccharomycetes</taxon>
        <taxon>Saccharomycetales</taxon>
        <taxon>Saccharomycetaceae</taxon>
        <taxon>Saccharomyces</taxon>
    </lineage>
</organism>
<dbReference type="EMBL" id="D11088">
    <property type="protein sequence ID" value="BAA01861.1"/>
    <property type="molecule type" value="Genomic_DNA"/>
</dbReference>
<dbReference type="EMBL" id="X75891">
    <property type="protein sequence ID" value="CAA53495.1"/>
    <property type="molecule type" value="Genomic_DNA"/>
</dbReference>
<dbReference type="EMBL" id="Z36006">
    <property type="protein sequence ID" value="CAA85095.1"/>
    <property type="molecule type" value="Genomic_DNA"/>
</dbReference>
<dbReference type="EMBL" id="AY558187">
    <property type="protein sequence ID" value="AAS56513.1"/>
    <property type="molecule type" value="Genomic_DNA"/>
</dbReference>
<dbReference type="EMBL" id="BK006936">
    <property type="protein sequence ID" value="DAA07253.2"/>
    <property type="molecule type" value="Genomic_DNA"/>
</dbReference>
<dbReference type="PIR" id="S46006">
    <property type="entry name" value="S46006"/>
</dbReference>
<dbReference type="RefSeq" id="NP_009695.2">
    <property type="nucleotide sequence ID" value="NM_001178485.2"/>
</dbReference>
<dbReference type="PDB" id="4CLC">
    <property type="method" value="X-ray"/>
    <property type="resolution" value="2.80 A"/>
    <property type="chains" value="A/B/C/D/E=1-179"/>
</dbReference>
<dbReference type="PDBsum" id="4CLC"/>
<dbReference type="SMR" id="P38276"/>
<dbReference type="BioGRID" id="32837">
    <property type="interactions" value="79"/>
</dbReference>
<dbReference type="ComplexPortal" id="CPX-1861">
    <property type="entry name" value="GET4-GET5 transmembrane domain recognition complex"/>
</dbReference>
<dbReference type="DIP" id="DIP-2038N"/>
<dbReference type="FunCoup" id="P38276">
    <property type="interactions" value="61"/>
</dbReference>
<dbReference type="IntAct" id="P38276">
    <property type="interactions" value="6"/>
</dbReference>
<dbReference type="MINT" id="P38276"/>
<dbReference type="STRING" id="4932.YBR137W"/>
<dbReference type="iPTMnet" id="P38276"/>
<dbReference type="PaxDb" id="4932-YBR137W"/>
<dbReference type="PeptideAtlas" id="P38276"/>
<dbReference type="EnsemblFungi" id="YBR137W_mRNA">
    <property type="protein sequence ID" value="YBR137W"/>
    <property type="gene ID" value="YBR137W"/>
</dbReference>
<dbReference type="GeneID" id="852434"/>
<dbReference type="KEGG" id="sce:YBR137W"/>
<dbReference type="AGR" id="SGD:S000000341"/>
<dbReference type="SGD" id="S000000341">
    <property type="gene designation" value="YBR137W"/>
</dbReference>
<dbReference type="VEuPathDB" id="FungiDB:YBR137W"/>
<dbReference type="eggNOG" id="ENOG502S03S">
    <property type="taxonomic scope" value="Eukaryota"/>
</dbReference>
<dbReference type="HOGENOM" id="CLU_101036_1_1_1"/>
<dbReference type="InParanoid" id="P38276"/>
<dbReference type="OMA" id="AWIDRKR"/>
<dbReference type="OrthoDB" id="2209940at2759"/>
<dbReference type="BioCyc" id="YEAST:G3O-29091-MONOMER"/>
<dbReference type="BioGRID-ORCS" id="852434">
    <property type="hits" value="1 hit in 10 CRISPR screens"/>
</dbReference>
<dbReference type="EvolutionaryTrace" id="P38276"/>
<dbReference type="PRO" id="PR:P38276"/>
<dbReference type="Proteomes" id="UP000002311">
    <property type="component" value="Chromosome II"/>
</dbReference>
<dbReference type="RNAct" id="P38276">
    <property type="molecule type" value="protein"/>
</dbReference>
<dbReference type="GO" id="GO:0005737">
    <property type="term" value="C:cytoplasm"/>
    <property type="evidence" value="ECO:0000314"/>
    <property type="project" value="SGD"/>
</dbReference>
<dbReference type="GO" id="GO:0005829">
    <property type="term" value="C:cytosol"/>
    <property type="evidence" value="ECO:0000303"/>
    <property type="project" value="ComplexPortal"/>
</dbReference>
<dbReference type="GO" id="GO:0072380">
    <property type="term" value="C:TRC complex"/>
    <property type="evidence" value="ECO:0000314"/>
    <property type="project" value="SGD"/>
</dbReference>
<dbReference type="GO" id="GO:0006620">
    <property type="term" value="P:post-translational protein targeting to endoplasmic reticulum membrane"/>
    <property type="evidence" value="ECO:0000316"/>
    <property type="project" value="SGD"/>
</dbReference>
<dbReference type="FunFam" id="3.30.450.150:FF:000004">
    <property type="entry name" value="UPF0303 protein YBR137W"/>
    <property type="match status" value="1"/>
</dbReference>
<dbReference type="Gene3D" id="3.30.450.150">
    <property type="entry name" value="Haem-degrading domain"/>
    <property type="match status" value="1"/>
</dbReference>
<dbReference type="InterPro" id="IPR005624">
    <property type="entry name" value="PduO/GlcC-like"/>
</dbReference>
<dbReference type="InterPro" id="IPR038084">
    <property type="entry name" value="PduO/GlcC-like_sf"/>
</dbReference>
<dbReference type="InterPro" id="IPR010371">
    <property type="entry name" value="YBR137W-like"/>
</dbReference>
<dbReference type="PANTHER" id="PTHR28255">
    <property type="match status" value="1"/>
</dbReference>
<dbReference type="PANTHER" id="PTHR28255:SF1">
    <property type="entry name" value="UPF0303 PROTEIN YBR137W"/>
    <property type="match status" value="1"/>
</dbReference>
<dbReference type="Pfam" id="PF03928">
    <property type="entry name" value="HbpS-like"/>
    <property type="match status" value="1"/>
</dbReference>
<dbReference type="PIRSF" id="PIRSF008757">
    <property type="entry name" value="UCP008757"/>
    <property type="match status" value="1"/>
</dbReference>
<dbReference type="SUPFAM" id="SSF143744">
    <property type="entry name" value="GlcG-like"/>
    <property type="match status" value="1"/>
</dbReference>
<reference key="1">
    <citation type="journal article" date="1994" name="Nucleic Acids Res.">
        <title>An essential gene, ESR1, is required for mitotic cell growth, DNA repair and meiotic recombination in Saccharomyces cerevisiae.</title>
        <authorList>
            <person name="Kato R."/>
            <person name="Ogawa H."/>
        </authorList>
    </citation>
    <scope>NUCLEOTIDE SEQUENCE [GENOMIC DNA]</scope>
</reference>
<reference key="2">
    <citation type="journal article" date="1994" name="Yeast">
        <title>The sequence of 29.7 kb from the right arm of chromosome II reveals 13 complete open reading frames, of which ten correspond to new genes.</title>
        <authorList>
            <person name="Becam A.-M."/>
            <person name="Cullin C."/>
            <person name="Grzybowska E."/>
            <person name="Lacroute F."/>
            <person name="Nasr F."/>
            <person name="Ozier-Kalogeropoulos O."/>
            <person name="Palucha A."/>
            <person name="Slonimski P.P."/>
            <person name="Zagulski M."/>
            <person name="Herbert C.J."/>
        </authorList>
    </citation>
    <scope>NUCLEOTIDE SEQUENCE [GENOMIC DNA]</scope>
    <source>
        <strain>ATCC 204508 / S288c</strain>
    </source>
</reference>
<reference key="3">
    <citation type="journal article" date="1994" name="EMBO J.">
        <title>Complete DNA sequence of yeast chromosome II.</title>
        <authorList>
            <person name="Feldmann H."/>
            <person name="Aigle M."/>
            <person name="Aljinovic G."/>
            <person name="Andre B."/>
            <person name="Baclet M.C."/>
            <person name="Barthe C."/>
            <person name="Baur A."/>
            <person name="Becam A.-M."/>
            <person name="Biteau N."/>
            <person name="Boles E."/>
            <person name="Brandt T."/>
            <person name="Brendel M."/>
            <person name="Brueckner M."/>
            <person name="Bussereau F."/>
            <person name="Christiansen C."/>
            <person name="Contreras R."/>
            <person name="Crouzet M."/>
            <person name="Cziepluch C."/>
            <person name="Demolis N."/>
            <person name="Delaveau T."/>
            <person name="Doignon F."/>
            <person name="Domdey H."/>
            <person name="Duesterhus S."/>
            <person name="Dubois E."/>
            <person name="Dujon B."/>
            <person name="El Bakkoury M."/>
            <person name="Entian K.-D."/>
            <person name="Feuermann M."/>
            <person name="Fiers W."/>
            <person name="Fobo G.M."/>
            <person name="Fritz C."/>
            <person name="Gassenhuber J."/>
            <person name="Glansdorff N."/>
            <person name="Goffeau A."/>
            <person name="Grivell L.A."/>
            <person name="de Haan M."/>
            <person name="Hein C."/>
            <person name="Herbert C.J."/>
            <person name="Hollenberg C.P."/>
            <person name="Holmstroem K."/>
            <person name="Jacq C."/>
            <person name="Jacquet M."/>
            <person name="Jauniaux J.-C."/>
            <person name="Jonniaux J.-L."/>
            <person name="Kallesoee T."/>
            <person name="Kiesau P."/>
            <person name="Kirchrath L."/>
            <person name="Koetter P."/>
            <person name="Korol S."/>
            <person name="Liebl S."/>
            <person name="Logghe M."/>
            <person name="Lohan A.J.E."/>
            <person name="Louis E.J."/>
            <person name="Li Z.Y."/>
            <person name="Maat M.J."/>
            <person name="Mallet L."/>
            <person name="Mannhaupt G."/>
            <person name="Messenguy F."/>
            <person name="Miosga T."/>
            <person name="Molemans F."/>
            <person name="Mueller S."/>
            <person name="Nasr F."/>
            <person name="Obermaier B."/>
            <person name="Perea J."/>
            <person name="Pierard A."/>
            <person name="Piravandi E."/>
            <person name="Pohl F.M."/>
            <person name="Pohl T.M."/>
            <person name="Potier S."/>
            <person name="Proft M."/>
            <person name="Purnelle B."/>
            <person name="Ramezani Rad M."/>
            <person name="Rieger M."/>
            <person name="Rose M."/>
            <person name="Schaaff-Gerstenschlaeger I."/>
            <person name="Scherens B."/>
            <person name="Schwarzlose C."/>
            <person name="Skala J."/>
            <person name="Slonimski P.P."/>
            <person name="Smits P.H.M."/>
            <person name="Souciet J.-L."/>
            <person name="Steensma H.Y."/>
            <person name="Stucka R."/>
            <person name="Urrestarazu L.A."/>
            <person name="van der Aart Q.J.M."/>
            <person name="Van Dyck L."/>
            <person name="Vassarotti A."/>
            <person name="Vetter I."/>
            <person name="Vierendeels F."/>
            <person name="Vissers S."/>
            <person name="Wagner G."/>
            <person name="de Wergifosse P."/>
            <person name="Wolfe K.H."/>
            <person name="Zagulski M."/>
            <person name="Zimmermann F.K."/>
            <person name="Mewes H.-W."/>
            <person name="Kleine K."/>
        </authorList>
    </citation>
    <scope>NUCLEOTIDE SEQUENCE [LARGE SCALE GENOMIC DNA]</scope>
    <source>
        <strain>ATCC 204508 / S288c</strain>
    </source>
</reference>
<reference key="4">
    <citation type="journal article" date="2014" name="G3 (Bethesda)">
        <title>The reference genome sequence of Saccharomyces cerevisiae: Then and now.</title>
        <authorList>
            <person name="Engel S.R."/>
            <person name="Dietrich F.S."/>
            <person name="Fisk D.G."/>
            <person name="Binkley G."/>
            <person name="Balakrishnan R."/>
            <person name="Costanzo M.C."/>
            <person name="Dwight S.S."/>
            <person name="Hitz B.C."/>
            <person name="Karra K."/>
            <person name="Nash R.S."/>
            <person name="Weng S."/>
            <person name="Wong E.D."/>
            <person name="Lloyd P."/>
            <person name="Skrzypek M.S."/>
            <person name="Miyasato S.R."/>
            <person name="Simison M."/>
            <person name="Cherry J.M."/>
        </authorList>
    </citation>
    <scope>GENOME REANNOTATION</scope>
    <scope>SEQUENCE REVISION TO 110</scope>
    <source>
        <strain>ATCC 204508 / S288c</strain>
    </source>
</reference>
<reference key="5">
    <citation type="journal article" date="2007" name="Genome Res.">
        <title>Approaching a complete repository of sequence-verified protein-encoding clones for Saccharomyces cerevisiae.</title>
        <authorList>
            <person name="Hu Y."/>
            <person name="Rolfs A."/>
            <person name="Bhullar B."/>
            <person name="Murthy T.V.S."/>
            <person name="Zhu C."/>
            <person name="Berger M.F."/>
            <person name="Camargo A.A."/>
            <person name="Kelley F."/>
            <person name="McCarron S."/>
            <person name="Jepson D."/>
            <person name="Richardson A."/>
            <person name="Raphael J."/>
            <person name="Moreira D."/>
            <person name="Taycher E."/>
            <person name="Zuo D."/>
            <person name="Mohr S."/>
            <person name="Kane M.F."/>
            <person name="Williamson J."/>
            <person name="Simpson A.J.G."/>
            <person name="Bulyk M.L."/>
            <person name="Harlow E."/>
            <person name="Marsischky G."/>
            <person name="Kolodner R.D."/>
            <person name="LaBaer J."/>
        </authorList>
    </citation>
    <scope>NUCLEOTIDE SEQUENCE [GENOMIC DNA]</scope>
    <source>
        <strain>ATCC 204508 / S288c</strain>
    </source>
</reference>
<reference key="6">
    <citation type="journal article" date="2003" name="Nature">
        <title>Global analysis of protein localization in budding yeast.</title>
        <authorList>
            <person name="Huh W.-K."/>
            <person name="Falvo J.V."/>
            <person name="Gerke L.C."/>
            <person name="Carroll A.S."/>
            <person name="Howson R.W."/>
            <person name="Weissman J.S."/>
            <person name="O'Shea E.K."/>
        </authorList>
    </citation>
    <scope>SUBCELLULAR LOCATION [LARGE SCALE ANALYSIS]</scope>
</reference>
<reference key="7">
    <citation type="journal article" date="2003" name="Nature">
        <title>Global analysis of protein expression in yeast.</title>
        <authorList>
            <person name="Ghaemmaghami S."/>
            <person name="Huh W.-K."/>
            <person name="Bower K."/>
            <person name="Howson R.W."/>
            <person name="Belle A."/>
            <person name="Dephoure N."/>
            <person name="O'Shea E.K."/>
            <person name="Weissman J.S."/>
        </authorList>
    </citation>
    <scope>LEVEL OF PROTEIN EXPRESSION [LARGE SCALE ANALYSIS]</scope>
</reference>
<reference key="8">
    <citation type="journal article" date="2012" name="Proc. Natl. Acad. Sci. U.S.A.">
        <title>N-terminal acetylome analyses and functional insights of the N-terminal acetyltransferase NatB.</title>
        <authorList>
            <person name="Van Damme P."/>
            <person name="Lasa M."/>
            <person name="Polevoda B."/>
            <person name="Gazquez C."/>
            <person name="Elosegui-Artola A."/>
            <person name="Kim D.S."/>
            <person name="De Juan-Pardo E."/>
            <person name="Demeyer K."/>
            <person name="Hole K."/>
            <person name="Larrea E."/>
            <person name="Timmerman E."/>
            <person name="Prieto J."/>
            <person name="Arnesen T."/>
            <person name="Sherman F."/>
            <person name="Gevaert K."/>
            <person name="Aldabe R."/>
        </authorList>
    </citation>
    <scope>IDENTIFICATION BY MASS SPECTROMETRY [LARGE SCALE ANALYSIS]</scope>
</reference>
<proteinExistence type="evidence at protein level"/>
<feature type="chain" id="PRO_0000208926" description="UPF0303 protein YBR137W">
    <location>
        <begin position="1"/>
        <end position="179"/>
    </location>
</feature>
<feature type="sequence conflict" description="In Ref. 2; CAA53495 and 3; CAA85095." evidence="3" ref="2 3">
    <original>G</original>
    <variation>S</variation>
    <location>
        <position position="110"/>
    </location>
</feature>
<feature type="helix" evidence="4">
    <location>
        <begin position="6"/>
        <end position="14"/>
    </location>
</feature>
<feature type="helix" evidence="4">
    <location>
        <begin position="19"/>
        <end position="27"/>
    </location>
</feature>
<feature type="strand" evidence="4">
    <location>
        <begin position="30"/>
        <end position="32"/>
    </location>
</feature>
<feature type="helix" evidence="4">
    <location>
        <begin position="36"/>
        <end position="53"/>
    </location>
</feature>
<feature type="strand" evidence="4">
    <location>
        <begin position="54"/>
        <end position="57"/>
    </location>
</feature>
<feature type="strand" evidence="4">
    <location>
        <begin position="60"/>
        <end position="64"/>
    </location>
</feature>
<feature type="strand" evidence="4">
    <location>
        <begin position="70"/>
        <end position="75"/>
    </location>
</feature>
<feature type="helix" evidence="4">
    <location>
        <begin position="82"/>
        <end position="98"/>
    </location>
</feature>
<feature type="helix" evidence="4">
    <location>
        <begin position="102"/>
        <end position="109"/>
    </location>
</feature>
<feature type="turn" evidence="4">
    <location>
        <begin position="114"/>
        <end position="116"/>
    </location>
</feature>
<feature type="turn" evidence="4">
    <location>
        <begin position="122"/>
        <end position="124"/>
    </location>
</feature>
<feature type="strand" evidence="4">
    <location>
        <begin position="131"/>
        <end position="136"/>
    </location>
</feature>
<feature type="turn" evidence="4">
    <location>
        <begin position="137"/>
        <end position="139"/>
    </location>
</feature>
<feature type="strand" evidence="4">
    <location>
        <begin position="143"/>
        <end position="151"/>
    </location>
</feature>
<feature type="helix" evidence="4">
    <location>
        <begin position="154"/>
        <end position="168"/>
    </location>
</feature>
<feature type="turn" evidence="4">
    <location>
        <begin position="169"/>
        <end position="172"/>
    </location>
</feature>